<dbReference type="EC" id="3.6.4.13"/>
<dbReference type="EMBL" id="DS480623">
    <property type="protein sequence ID" value="EDO14321.1"/>
    <property type="molecule type" value="Genomic_DNA"/>
</dbReference>
<dbReference type="RefSeq" id="XP_001642179.1">
    <property type="nucleotide sequence ID" value="XM_001642129.1"/>
</dbReference>
<dbReference type="SMR" id="A7TTT5"/>
<dbReference type="FunCoup" id="A7TTT5">
    <property type="interactions" value="1311"/>
</dbReference>
<dbReference type="STRING" id="436907.A7TTT5"/>
<dbReference type="GeneID" id="5542292"/>
<dbReference type="KEGG" id="vpo:Kpol_165p1"/>
<dbReference type="eggNOG" id="KOG0331">
    <property type="taxonomic scope" value="Eukaryota"/>
</dbReference>
<dbReference type="HOGENOM" id="CLU_003041_16_9_1"/>
<dbReference type="InParanoid" id="A7TTT5"/>
<dbReference type="OMA" id="MGQTANY"/>
<dbReference type="OrthoDB" id="196131at2759"/>
<dbReference type="PhylomeDB" id="A7TTT5"/>
<dbReference type="Proteomes" id="UP000000267">
    <property type="component" value="Unassembled WGS sequence"/>
</dbReference>
<dbReference type="GO" id="GO:0005737">
    <property type="term" value="C:cytoplasm"/>
    <property type="evidence" value="ECO:0007669"/>
    <property type="project" value="UniProtKB-SubCell"/>
</dbReference>
<dbReference type="GO" id="GO:0005634">
    <property type="term" value="C:nucleus"/>
    <property type="evidence" value="ECO:0007669"/>
    <property type="project" value="UniProtKB-SubCell"/>
</dbReference>
<dbReference type="GO" id="GO:0005524">
    <property type="term" value="F:ATP binding"/>
    <property type="evidence" value="ECO:0007669"/>
    <property type="project" value="UniProtKB-KW"/>
</dbReference>
<dbReference type="GO" id="GO:0016887">
    <property type="term" value="F:ATP hydrolysis activity"/>
    <property type="evidence" value="ECO:0007669"/>
    <property type="project" value="RHEA"/>
</dbReference>
<dbReference type="GO" id="GO:0051880">
    <property type="term" value="F:G-quadruplex DNA binding"/>
    <property type="evidence" value="ECO:0007669"/>
    <property type="project" value="EnsemblFungi"/>
</dbReference>
<dbReference type="GO" id="GO:0002151">
    <property type="term" value="F:G-quadruplex RNA binding"/>
    <property type="evidence" value="ECO:0007669"/>
    <property type="project" value="EnsemblFungi"/>
</dbReference>
<dbReference type="GO" id="GO:0003729">
    <property type="term" value="F:mRNA binding"/>
    <property type="evidence" value="ECO:0007669"/>
    <property type="project" value="EnsemblFungi"/>
</dbReference>
<dbReference type="GO" id="GO:0003724">
    <property type="term" value="F:RNA helicase activity"/>
    <property type="evidence" value="ECO:0007669"/>
    <property type="project" value="UniProtKB-EC"/>
</dbReference>
<dbReference type="GO" id="GO:0030515">
    <property type="term" value="F:snoRNA binding"/>
    <property type="evidence" value="ECO:0007669"/>
    <property type="project" value="EnsemblFungi"/>
</dbReference>
<dbReference type="GO" id="GO:0071042">
    <property type="term" value="P:nuclear polyadenylation-dependent mRNA catabolic process"/>
    <property type="evidence" value="ECO:0007669"/>
    <property type="project" value="EnsemblFungi"/>
</dbReference>
<dbReference type="GO" id="GO:0000184">
    <property type="term" value="P:nuclear-transcribed mRNA catabolic process, nonsense-mediated decay"/>
    <property type="evidence" value="ECO:0007669"/>
    <property type="project" value="UniProtKB-KW"/>
</dbReference>
<dbReference type="GO" id="GO:0006364">
    <property type="term" value="P:rRNA processing"/>
    <property type="evidence" value="ECO:0007669"/>
    <property type="project" value="UniProtKB-KW"/>
</dbReference>
<dbReference type="GO" id="GO:0006369">
    <property type="term" value="P:termination of RNA polymerase II transcription"/>
    <property type="evidence" value="ECO:0007669"/>
    <property type="project" value="EnsemblFungi"/>
</dbReference>
<dbReference type="CDD" id="cd17966">
    <property type="entry name" value="DEADc_DDX5_DDX17"/>
    <property type="match status" value="1"/>
</dbReference>
<dbReference type="CDD" id="cd18787">
    <property type="entry name" value="SF2_C_DEAD"/>
    <property type="match status" value="1"/>
</dbReference>
<dbReference type="FunFam" id="3.40.50.300:FF:000079">
    <property type="entry name" value="probable ATP-dependent RNA helicase DDX17"/>
    <property type="match status" value="1"/>
</dbReference>
<dbReference type="Gene3D" id="3.40.50.300">
    <property type="entry name" value="P-loop containing nucleotide triphosphate hydrolases"/>
    <property type="match status" value="2"/>
</dbReference>
<dbReference type="InterPro" id="IPR011545">
    <property type="entry name" value="DEAD/DEAH_box_helicase_dom"/>
</dbReference>
<dbReference type="InterPro" id="IPR014001">
    <property type="entry name" value="Helicase_ATP-bd"/>
</dbReference>
<dbReference type="InterPro" id="IPR001650">
    <property type="entry name" value="Helicase_C-like"/>
</dbReference>
<dbReference type="InterPro" id="IPR027417">
    <property type="entry name" value="P-loop_NTPase"/>
</dbReference>
<dbReference type="InterPro" id="IPR000629">
    <property type="entry name" value="RNA-helicase_DEAD-box_CS"/>
</dbReference>
<dbReference type="InterPro" id="IPR014014">
    <property type="entry name" value="RNA_helicase_DEAD_Q_motif"/>
</dbReference>
<dbReference type="PANTHER" id="PTHR47958">
    <property type="entry name" value="ATP-DEPENDENT RNA HELICASE DBP3"/>
    <property type="match status" value="1"/>
</dbReference>
<dbReference type="Pfam" id="PF00270">
    <property type="entry name" value="DEAD"/>
    <property type="match status" value="1"/>
</dbReference>
<dbReference type="Pfam" id="PF00271">
    <property type="entry name" value="Helicase_C"/>
    <property type="match status" value="1"/>
</dbReference>
<dbReference type="SMART" id="SM00487">
    <property type="entry name" value="DEXDc"/>
    <property type="match status" value="1"/>
</dbReference>
<dbReference type="SMART" id="SM00490">
    <property type="entry name" value="HELICc"/>
    <property type="match status" value="1"/>
</dbReference>
<dbReference type="SUPFAM" id="SSF52540">
    <property type="entry name" value="P-loop containing nucleoside triphosphate hydrolases"/>
    <property type="match status" value="2"/>
</dbReference>
<dbReference type="PROSITE" id="PS00039">
    <property type="entry name" value="DEAD_ATP_HELICASE"/>
    <property type="match status" value="1"/>
</dbReference>
<dbReference type="PROSITE" id="PS51192">
    <property type="entry name" value="HELICASE_ATP_BIND_1"/>
    <property type="match status" value="1"/>
</dbReference>
<dbReference type="PROSITE" id="PS51194">
    <property type="entry name" value="HELICASE_CTER"/>
    <property type="match status" value="1"/>
</dbReference>
<dbReference type="PROSITE" id="PS51195">
    <property type="entry name" value="Q_MOTIF"/>
    <property type="match status" value="1"/>
</dbReference>
<name>DBP2_VANPO</name>
<accession>A7TTT5</accession>
<evidence type="ECO:0000250" key="1"/>
<evidence type="ECO:0000255" key="2">
    <source>
        <dbReference type="PROSITE-ProRule" id="PRU00541"/>
    </source>
</evidence>
<evidence type="ECO:0000255" key="3">
    <source>
        <dbReference type="PROSITE-ProRule" id="PRU00542"/>
    </source>
</evidence>
<evidence type="ECO:0000256" key="4">
    <source>
        <dbReference type="SAM" id="MobiDB-lite"/>
    </source>
</evidence>
<evidence type="ECO:0000305" key="5"/>
<protein>
    <recommendedName>
        <fullName>ATP-dependent RNA helicase DBP2</fullName>
        <ecNumber>3.6.4.13</ecNumber>
    </recommendedName>
</protein>
<proteinExistence type="inferred from homology"/>
<feature type="chain" id="PRO_0000310189" description="ATP-dependent RNA helicase DBP2">
    <location>
        <begin position="1"/>
        <end position="441"/>
    </location>
</feature>
<feature type="domain" description="Helicase ATP-binding" evidence="2">
    <location>
        <begin position="144"/>
        <end position="319"/>
    </location>
</feature>
<feature type="domain" description="Helicase C-terminal" evidence="3">
    <location>
        <begin position="347"/>
        <end position="441"/>
    </location>
</feature>
<feature type="region of interest" description="Disordered" evidence="4">
    <location>
        <begin position="1"/>
        <end position="54"/>
    </location>
</feature>
<feature type="short sequence motif" description="Q motif">
    <location>
        <begin position="113"/>
        <end position="141"/>
    </location>
</feature>
<feature type="short sequence motif" description="DEAD box">
    <location>
        <begin position="267"/>
        <end position="270"/>
    </location>
</feature>
<feature type="compositionally biased region" description="Polar residues" evidence="4">
    <location>
        <begin position="7"/>
        <end position="16"/>
    </location>
</feature>
<feature type="compositionally biased region" description="Basic and acidic residues" evidence="4">
    <location>
        <begin position="19"/>
        <end position="38"/>
    </location>
</feature>
<feature type="binding site" evidence="2">
    <location>
        <begin position="157"/>
        <end position="164"/>
    </location>
    <ligand>
        <name>ATP</name>
        <dbReference type="ChEBI" id="CHEBI:30616"/>
    </ligand>
</feature>
<reference key="1">
    <citation type="journal article" date="2007" name="Proc. Natl. Acad. Sci. U.S.A.">
        <title>Independent sorting-out of thousands of duplicated gene pairs in two yeast species descended from a whole-genome duplication.</title>
        <authorList>
            <person name="Scannell D.R."/>
            <person name="Frank A.C."/>
            <person name="Conant G.C."/>
            <person name="Byrne K.P."/>
            <person name="Woolfit M."/>
            <person name="Wolfe K.H."/>
        </authorList>
    </citation>
    <scope>NUCLEOTIDE SEQUENCE [LARGE SCALE GENOMIC DNA]</scope>
    <source>
        <strain>ATCC 22028 / DSM 70294 / BCRC 21397 / CBS 2163 / NBRC 10782 / NRRL Y-8283 / UCD 57-17</strain>
    </source>
</reference>
<keyword id="KW-0067">ATP-binding</keyword>
<keyword id="KW-0963">Cytoplasm</keyword>
<keyword id="KW-0347">Helicase</keyword>
<keyword id="KW-0378">Hydrolase</keyword>
<keyword id="KW-0866">Nonsense-mediated mRNA decay</keyword>
<keyword id="KW-0547">Nucleotide-binding</keyword>
<keyword id="KW-0539">Nucleus</keyword>
<keyword id="KW-1185">Reference proteome</keyword>
<keyword id="KW-0690">Ribosome biogenesis</keyword>
<keyword id="KW-0694">RNA-binding</keyword>
<keyword id="KW-0698">rRNA processing</keyword>
<sequence>MGYGRDQQYNKSNFNSRGGDFRGDRSSDRNSYNRDRNDNFGQRGGNQGGRSFNQPQELIKPNWEEELPNLPVFEKNFYQEAESVKARSDQEINEFRREHEMTITGHDIPKPITSFDEAGFPDYVLEEVKAEGFEKPTGIQCQGWPMALSGRDMIGVAATGSGKTLSYCLPGIVHINAQPLLSPGDGPIVLVLAPTRELAVQIQKECSKFGSSSRIRNSCVYGGVPRGQQIRELSRGAEIVIATPGRLIDMLEIGKTNLKRVTYLVLDEADRMLDMGFEPQIRKIVDQIRPDRQTLMWSATWPKEVKQLAHDYLNDPIQVQIGSLELSASHNITQLVEVVSDFEKRDRLLKHLETASEDKDSKILVFASTKRTCDEVTKYLREDGWPALAIHGDKDQRERDWVLQEFREGRSPIMVATDVAARGIGMYTNFFFQFCIFFTTN</sequence>
<organism>
    <name type="scientific">Vanderwaltozyma polyspora (strain ATCC 22028 / DSM 70294 / BCRC 21397 / CBS 2163 / NBRC 10782 / NRRL Y-8283 / UCD 57-17)</name>
    <name type="common">Kluyveromyces polysporus</name>
    <dbReference type="NCBI Taxonomy" id="436907"/>
    <lineage>
        <taxon>Eukaryota</taxon>
        <taxon>Fungi</taxon>
        <taxon>Dikarya</taxon>
        <taxon>Ascomycota</taxon>
        <taxon>Saccharomycotina</taxon>
        <taxon>Saccharomycetes</taxon>
        <taxon>Saccharomycetales</taxon>
        <taxon>Saccharomycetaceae</taxon>
        <taxon>Vanderwaltozyma</taxon>
    </lineage>
</organism>
<comment type="function">
    <text evidence="1">ATP-dependent RNA helicase involved nonsense-mediated mRNA decay and ribosome biogenesis through rRNA processing.</text>
</comment>
<comment type="catalytic activity">
    <reaction>
        <text>ATP + H2O = ADP + phosphate + H(+)</text>
        <dbReference type="Rhea" id="RHEA:13065"/>
        <dbReference type="ChEBI" id="CHEBI:15377"/>
        <dbReference type="ChEBI" id="CHEBI:15378"/>
        <dbReference type="ChEBI" id="CHEBI:30616"/>
        <dbReference type="ChEBI" id="CHEBI:43474"/>
        <dbReference type="ChEBI" id="CHEBI:456216"/>
        <dbReference type="EC" id="3.6.4.13"/>
    </reaction>
</comment>
<comment type="subunit">
    <text evidence="1">Associates with polysomes.</text>
</comment>
<comment type="subcellular location">
    <subcellularLocation>
        <location evidence="1">Cytoplasm</location>
    </subcellularLocation>
    <subcellularLocation>
        <location evidence="1">Nucleus</location>
    </subcellularLocation>
</comment>
<comment type="domain">
    <text>The Q motif is unique to and characteristic of the DEAD box family of RNA helicases and controls ATP binding and hydrolysis.</text>
</comment>
<comment type="similarity">
    <text evidence="5">Belongs to the DEAD box helicase family. DDX5/DBP2 subfamily.</text>
</comment>
<gene>
    <name type="primary">DBP2</name>
    <name type="ORF">Kpol_165p1</name>
</gene>